<comment type="catalytic activity">
    <reaction>
        <text>1-(5-phospho-beta-D-ribosyl)-5-[(5-phospho-beta-D-ribosylamino)methylideneamino]imidazole-4-carboxamide = 5-[(5-phospho-1-deoxy-D-ribulos-1-ylimino)methylamino]-1-(5-phospho-beta-D-ribosyl)imidazole-4-carboxamide</text>
        <dbReference type="Rhea" id="RHEA:15469"/>
        <dbReference type="ChEBI" id="CHEBI:58435"/>
        <dbReference type="ChEBI" id="CHEBI:58525"/>
        <dbReference type="EC" id="5.3.1.16"/>
    </reaction>
</comment>
<comment type="pathway">
    <text>Amino-acid biosynthesis; L-histidine biosynthesis; L-histidine from 5-phospho-alpha-D-ribose 1-diphosphate: step 4/9.</text>
</comment>
<comment type="subcellular location">
    <subcellularLocation>
        <location evidence="1">Cytoplasm</location>
    </subcellularLocation>
</comment>
<comment type="similarity">
    <text evidence="2">Belongs to the HisA/HisF family.</text>
</comment>
<accession>O67328</accession>
<keyword id="KW-0028">Amino-acid biosynthesis</keyword>
<keyword id="KW-0963">Cytoplasm</keyword>
<keyword id="KW-0368">Histidine biosynthesis</keyword>
<keyword id="KW-0413">Isomerase</keyword>
<keyword id="KW-1185">Reference proteome</keyword>
<feature type="chain" id="PRO_0000141967" description="1-(5-phosphoribosyl)-5-[(5-phosphoribosylamino)methylideneamino] imidazole-4-carboxamide isomerase">
    <location>
        <begin position="1"/>
        <end position="238"/>
    </location>
</feature>
<feature type="active site" description="Proton acceptor" evidence="1">
    <location>
        <position position="12"/>
    </location>
</feature>
<feature type="active site" description="Proton donor" evidence="1">
    <location>
        <position position="133"/>
    </location>
</feature>
<proteinExistence type="inferred from homology"/>
<dbReference type="EC" id="5.3.1.16"/>
<dbReference type="EMBL" id="AE000657">
    <property type="protein sequence ID" value="AAC07284.1"/>
    <property type="molecule type" value="Genomic_DNA"/>
</dbReference>
<dbReference type="PIR" id="E70412">
    <property type="entry name" value="E70412"/>
</dbReference>
<dbReference type="RefSeq" id="NP_213892.1">
    <property type="nucleotide sequence ID" value="NC_000918.1"/>
</dbReference>
<dbReference type="RefSeq" id="WP_010880830.1">
    <property type="nucleotide sequence ID" value="NC_000918.1"/>
</dbReference>
<dbReference type="SMR" id="O67328"/>
<dbReference type="FunCoup" id="O67328">
    <property type="interactions" value="404"/>
</dbReference>
<dbReference type="STRING" id="224324.aq_1303"/>
<dbReference type="EnsemblBacteria" id="AAC07284">
    <property type="protein sequence ID" value="AAC07284"/>
    <property type="gene ID" value="aq_1303"/>
</dbReference>
<dbReference type="KEGG" id="aae:aq_1303"/>
<dbReference type="PATRIC" id="fig|224324.8.peg.1016"/>
<dbReference type="eggNOG" id="COG0106">
    <property type="taxonomic scope" value="Bacteria"/>
</dbReference>
<dbReference type="HOGENOM" id="CLU_048577_1_2_0"/>
<dbReference type="InParanoid" id="O67328"/>
<dbReference type="OrthoDB" id="9781903at2"/>
<dbReference type="UniPathway" id="UPA00031">
    <property type="reaction ID" value="UER00009"/>
</dbReference>
<dbReference type="Proteomes" id="UP000000798">
    <property type="component" value="Chromosome"/>
</dbReference>
<dbReference type="GO" id="GO:0005737">
    <property type="term" value="C:cytoplasm"/>
    <property type="evidence" value="ECO:0000318"/>
    <property type="project" value="GO_Central"/>
</dbReference>
<dbReference type="GO" id="GO:0003949">
    <property type="term" value="F:1-(5-phosphoribosyl)-5-[(5-phosphoribosylamino)methylideneamino]imidazole-4-carboxamide isomerase activity"/>
    <property type="evidence" value="ECO:0000318"/>
    <property type="project" value="GO_Central"/>
</dbReference>
<dbReference type="GO" id="GO:0000105">
    <property type="term" value="P:L-histidine biosynthetic process"/>
    <property type="evidence" value="ECO:0000318"/>
    <property type="project" value="GO_Central"/>
</dbReference>
<dbReference type="CDD" id="cd04732">
    <property type="entry name" value="HisA"/>
    <property type="match status" value="1"/>
</dbReference>
<dbReference type="FunFam" id="3.20.20.70:FF:000009">
    <property type="entry name" value="1-(5-phosphoribosyl)-5-[(5-phosphoribosylamino)methylideneamino] imidazole-4-carboxamide isomerase"/>
    <property type="match status" value="1"/>
</dbReference>
<dbReference type="Gene3D" id="3.20.20.70">
    <property type="entry name" value="Aldolase class I"/>
    <property type="match status" value="1"/>
</dbReference>
<dbReference type="HAMAP" id="MF_01014">
    <property type="entry name" value="HisA"/>
    <property type="match status" value="1"/>
</dbReference>
<dbReference type="InterPro" id="IPR013785">
    <property type="entry name" value="Aldolase_TIM"/>
</dbReference>
<dbReference type="InterPro" id="IPR006062">
    <property type="entry name" value="His_biosynth"/>
</dbReference>
<dbReference type="InterPro" id="IPR006063">
    <property type="entry name" value="HisA_bact_arch"/>
</dbReference>
<dbReference type="InterPro" id="IPR044524">
    <property type="entry name" value="Isoase_HisA-like"/>
</dbReference>
<dbReference type="InterPro" id="IPR023016">
    <property type="entry name" value="Isoase_HisA-like_bact"/>
</dbReference>
<dbReference type="InterPro" id="IPR011060">
    <property type="entry name" value="RibuloseP-bd_barrel"/>
</dbReference>
<dbReference type="NCBIfam" id="TIGR00007">
    <property type="entry name" value="1-(5-phosphoribosyl)-5-[(5-phosphoribosylamino)methylideneamino]imidazole-4-carboxamide isomerase"/>
    <property type="match status" value="1"/>
</dbReference>
<dbReference type="PANTHER" id="PTHR43090">
    <property type="entry name" value="1-(5-PHOSPHORIBOSYL)-5-[(5-PHOSPHORIBOSYLAMINO)METHYLIDENEAMINO] IMIDAZOLE-4-CARBOXAMIDE ISOMERASE"/>
    <property type="match status" value="1"/>
</dbReference>
<dbReference type="PANTHER" id="PTHR43090:SF2">
    <property type="entry name" value="1-(5-PHOSPHORIBOSYL)-5-[(5-PHOSPHORIBOSYLAMINO)METHYLIDENEAMINO] IMIDAZOLE-4-CARBOXAMIDE ISOMERASE"/>
    <property type="match status" value="1"/>
</dbReference>
<dbReference type="Pfam" id="PF00977">
    <property type="entry name" value="His_biosynth"/>
    <property type="match status" value="1"/>
</dbReference>
<dbReference type="SUPFAM" id="SSF51366">
    <property type="entry name" value="Ribulose-phoshate binding barrel"/>
    <property type="match status" value="1"/>
</dbReference>
<name>HIS4_AQUAE</name>
<protein>
    <recommendedName>
        <fullName>1-(5-phosphoribosyl)-5-[(5-phosphoribosylamino)methylideneamino] imidazole-4-carboxamide isomerase</fullName>
        <ecNumber>5.3.1.16</ecNumber>
    </recommendedName>
    <alternativeName>
        <fullName>Phosphoribosylformimino-5-aminoimidazole carboxamide ribotide isomerase</fullName>
    </alternativeName>
</protein>
<organism>
    <name type="scientific">Aquifex aeolicus (strain VF5)</name>
    <dbReference type="NCBI Taxonomy" id="224324"/>
    <lineage>
        <taxon>Bacteria</taxon>
        <taxon>Pseudomonadati</taxon>
        <taxon>Aquificota</taxon>
        <taxon>Aquificia</taxon>
        <taxon>Aquificales</taxon>
        <taxon>Aquificaceae</taxon>
        <taxon>Aquifex</taxon>
    </lineage>
</organism>
<sequence length="238" mass="26853">MNLKEFIIPAIDLMEGKAVRLYKGDFNKVKVYSERPWELAKNFSDLGFKRLHVVDLEGAEGGKPKNLEVIRKIRENFEGEVEVGGGIRSYEVAKALFDEGIDFVVIGTLAYKNKEEFLKILENFPNRVILAIDSKQGKVAIGGWKEETAVSPEEFAKEYENYPIWGYLYTVIERDGSLEGVDVEPYKEIKKHVKKPVIASGGVSSLEDIKKLYGIVEGVVVGKAIYEGRITLEDLQNF</sequence>
<evidence type="ECO:0000250" key="1"/>
<evidence type="ECO:0000305" key="2"/>
<reference key="1">
    <citation type="journal article" date="1998" name="Nature">
        <title>The complete genome of the hyperthermophilic bacterium Aquifex aeolicus.</title>
        <authorList>
            <person name="Deckert G."/>
            <person name="Warren P.V."/>
            <person name="Gaasterland T."/>
            <person name="Young W.G."/>
            <person name="Lenox A.L."/>
            <person name="Graham D.E."/>
            <person name="Overbeek R."/>
            <person name="Snead M.A."/>
            <person name="Keller M."/>
            <person name="Aujay M."/>
            <person name="Huber R."/>
            <person name="Feldman R.A."/>
            <person name="Short J.M."/>
            <person name="Olsen G.J."/>
            <person name="Swanson R.V."/>
        </authorList>
    </citation>
    <scope>NUCLEOTIDE SEQUENCE [LARGE SCALE GENOMIC DNA]</scope>
    <source>
        <strain>VF5</strain>
    </source>
</reference>
<gene>
    <name type="primary">hisA</name>
    <name type="ordered locus">aq_1303</name>
</gene>